<protein>
    <recommendedName>
        <fullName evidence="5">Myrmicitoxin(1)-Pr1a</fullName>
        <shortName evidence="5">MYRTX(1)-Pr1a</shortName>
    </recommendedName>
</protein>
<evidence type="ECO:0000250" key="1">
    <source>
        <dbReference type="UniProtKB" id="A0A8U0LTF0"/>
    </source>
</evidence>
<evidence type="ECO:0000250" key="2">
    <source>
        <dbReference type="UniProtKB" id="P0DRD0"/>
    </source>
</evidence>
<evidence type="ECO:0000250" key="3">
    <source>
        <dbReference type="UniProtKB" id="P0DX61"/>
    </source>
</evidence>
<evidence type="ECO:0000255" key="4"/>
<evidence type="ECO:0000303" key="5">
    <source>
    </source>
</evidence>
<evidence type="ECO:0000305" key="6"/>
<evidence type="ECO:0000305" key="7">
    <source>
    </source>
</evidence>
<reference key="1">
    <citation type="journal article" date="2024" name="J. Biol. Chem.">
        <title>Peptide toxins that target vertebrate voltage-gated sodium channels underly the painful stings of harvester ants.</title>
        <authorList>
            <person name="Robinson S.D."/>
            <person name="Deuis J.R."/>
            <person name="Niu P."/>
            <person name="Touchard A."/>
            <person name="Mueller A."/>
            <person name="Schendel V."/>
            <person name="Brinkwirth N."/>
            <person name="King G.F."/>
            <person name="Vetter I."/>
            <person name="Schmidt J.O."/>
        </authorList>
    </citation>
    <scope>NUCLEOTIDE SEQUENCE [MRNA]</scope>
    <scope>PROBABLE AMIDATION AT PHE-79</scope>
    <source>
        <tissue>Venom gland</tissue>
    </source>
</reference>
<accession>P0DXT1</accession>
<organism>
    <name type="scientific">Pogonomyrmex rugosus</name>
    <name type="common">Desert harvester ant</name>
    <dbReference type="NCBI Taxonomy" id="144042"/>
    <lineage>
        <taxon>Eukaryota</taxon>
        <taxon>Metazoa</taxon>
        <taxon>Ecdysozoa</taxon>
        <taxon>Arthropoda</taxon>
        <taxon>Hexapoda</taxon>
        <taxon>Insecta</taxon>
        <taxon>Pterygota</taxon>
        <taxon>Neoptera</taxon>
        <taxon>Endopterygota</taxon>
        <taxon>Hymenoptera</taxon>
        <taxon>Apocrita</taxon>
        <taxon>Aculeata</taxon>
        <taxon>Formicoidea</taxon>
        <taxon>Formicidae</taxon>
        <taxon>Myrmicinae</taxon>
        <taxon>Pogonomyrmex</taxon>
    </lineage>
</organism>
<keyword id="KW-0027">Amidation</keyword>
<keyword id="KW-0872">Ion channel impairing toxin</keyword>
<keyword id="KW-0964">Secreted</keyword>
<keyword id="KW-0732">Signal</keyword>
<keyword id="KW-0800">Toxin</keyword>
<keyword id="KW-0738">Voltage-gated sodium channel impairing toxin</keyword>
<feature type="signal peptide" evidence="4">
    <location>
        <begin position="1"/>
        <end position="23"/>
    </location>
</feature>
<feature type="propeptide" id="PRO_0000461241" evidence="7">
    <location>
        <begin position="24"/>
        <end position="57"/>
    </location>
</feature>
<feature type="peptide" id="PRO_0000461242" description="Myrmicitoxin(1)-Pr1a" evidence="7">
    <location>
        <begin position="58"/>
        <end position="79"/>
    </location>
</feature>
<feature type="modified residue" description="Phenylalanine amide" evidence="7">
    <location>
        <position position="79"/>
    </location>
</feature>
<proteinExistence type="evidence at protein level"/>
<name>TX1A_POGRU</name>
<comment type="function">
    <text evidence="1 2 3">Vertebrate-selective toxin that causes pain by targeting voltage-gated sodium channels.</text>
</comment>
<comment type="subcellular location">
    <subcellularLocation>
        <location evidence="7">Secreted</location>
    </subcellularLocation>
</comment>
<comment type="tissue specificity">
    <text evidence="7">Expressed by the venom gland.</text>
</comment>
<comment type="similarity">
    <text evidence="6">Belongs to the formicidae venom clade 1 family.</text>
</comment>
<dbReference type="EMBL" id="OR128473">
    <property type="protein sequence ID" value="WMI02511.1"/>
    <property type="molecule type" value="mRNA"/>
</dbReference>
<dbReference type="GO" id="GO:0005576">
    <property type="term" value="C:extracellular region"/>
    <property type="evidence" value="ECO:0007669"/>
    <property type="project" value="UniProtKB-SubCell"/>
</dbReference>
<dbReference type="GO" id="GO:0017080">
    <property type="term" value="F:sodium channel regulator activity"/>
    <property type="evidence" value="ECO:0007669"/>
    <property type="project" value="UniProtKB-KW"/>
</dbReference>
<dbReference type="GO" id="GO:0090729">
    <property type="term" value="F:toxin activity"/>
    <property type="evidence" value="ECO:0007669"/>
    <property type="project" value="UniProtKB-KW"/>
</dbReference>
<sequence length="80" mass="8219">MEIPKLLYIAVIAIGLSGSLTWATPLANPLAEAEAEAKATAEATAEALAEALAEPEPGLPILAAAVVIPFIHHYLVGKFG</sequence>